<evidence type="ECO:0000255" key="1">
    <source>
        <dbReference type="HAMAP-Rule" id="MF_01547"/>
    </source>
</evidence>
<feature type="chain" id="PRO_1000087686" description="Ribosomal RNA large subunit methyltransferase E">
    <location>
        <begin position="1"/>
        <end position="206"/>
    </location>
</feature>
<feature type="active site" description="Proton acceptor" evidence="1">
    <location>
        <position position="161"/>
    </location>
</feature>
<feature type="binding site" evidence="1">
    <location>
        <position position="60"/>
    </location>
    <ligand>
        <name>S-adenosyl-L-methionine</name>
        <dbReference type="ChEBI" id="CHEBI:59789"/>
    </ligand>
</feature>
<feature type="binding site" evidence="1">
    <location>
        <position position="62"/>
    </location>
    <ligand>
        <name>S-adenosyl-L-methionine</name>
        <dbReference type="ChEBI" id="CHEBI:59789"/>
    </ligand>
</feature>
<feature type="binding site" evidence="1">
    <location>
        <position position="80"/>
    </location>
    <ligand>
        <name>S-adenosyl-L-methionine</name>
        <dbReference type="ChEBI" id="CHEBI:59789"/>
    </ligand>
</feature>
<feature type="binding site" evidence="1">
    <location>
        <position position="96"/>
    </location>
    <ligand>
        <name>S-adenosyl-L-methionine</name>
        <dbReference type="ChEBI" id="CHEBI:59789"/>
    </ligand>
</feature>
<feature type="binding site" evidence="1">
    <location>
        <position position="121"/>
    </location>
    <ligand>
        <name>S-adenosyl-L-methionine</name>
        <dbReference type="ChEBI" id="CHEBI:59789"/>
    </ligand>
</feature>
<protein>
    <recommendedName>
        <fullName evidence="1">Ribosomal RNA large subunit methyltransferase E</fullName>
        <ecNumber evidence="1">2.1.1.166</ecNumber>
    </recommendedName>
    <alternativeName>
        <fullName evidence="1">23S rRNA Um2552 methyltransferase</fullName>
    </alternativeName>
    <alternativeName>
        <fullName evidence="1">rRNA (uridine-2'-O-)-methyltransferase</fullName>
    </alternativeName>
</protein>
<reference key="1">
    <citation type="submission" date="2007-12" db="EMBL/GenBank/DDBJ databases">
        <title>Complete sequence of chromosome of Francisella philomiragia subsp. philomiragia ATCC 25017.</title>
        <authorList>
            <consortium name="US DOE Joint Genome Institute"/>
            <person name="Copeland A."/>
            <person name="Lucas S."/>
            <person name="Lapidus A."/>
            <person name="Barry K."/>
            <person name="Detter J.C."/>
            <person name="Glavina del Rio T."/>
            <person name="Hammon N."/>
            <person name="Israni S."/>
            <person name="Dalin E."/>
            <person name="Tice H."/>
            <person name="Pitluck S."/>
            <person name="Chain P."/>
            <person name="Malfatti S."/>
            <person name="Shin M."/>
            <person name="Vergez L."/>
            <person name="Schmutz J."/>
            <person name="Larimer F."/>
            <person name="Land M."/>
            <person name="Hauser L."/>
            <person name="Richardson P."/>
        </authorList>
    </citation>
    <scope>NUCLEOTIDE SEQUENCE [LARGE SCALE GENOMIC DNA]</scope>
    <source>
        <strain>ATCC 25017 / CCUG 19701 / FSC 153 / O#319-036</strain>
    </source>
</reference>
<gene>
    <name evidence="1" type="primary">rlmE</name>
    <name evidence="1" type="synonym">ftsJ</name>
    <name evidence="1" type="synonym">rrmJ</name>
    <name type="ordered locus">Fphi_0399</name>
</gene>
<proteinExistence type="inferred from homology"/>
<comment type="function">
    <text evidence="1">Specifically methylates the uridine in position 2552 of 23S rRNA at the 2'-O position of the ribose in the fully assembled 50S ribosomal subunit.</text>
</comment>
<comment type="catalytic activity">
    <reaction evidence="1">
        <text>uridine(2552) in 23S rRNA + S-adenosyl-L-methionine = 2'-O-methyluridine(2552) in 23S rRNA + S-adenosyl-L-homocysteine + H(+)</text>
        <dbReference type="Rhea" id="RHEA:42720"/>
        <dbReference type="Rhea" id="RHEA-COMP:10202"/>
        <dbReference type="Rhea" id="RHEA-COMP:10203"/>
        <dbReference type="ChEBI" id="CHEBI:15378"/>
        <dbReference type="ChEBI" id="CHEBI:57856"/>
        <dbReference type="ChEBI" id="CHEBI:59789"/>
        <dbReference type="ChEBI" id="CHEBI:65315"/>
        <dbReference type="ChEBI" id="CHEBI:74478"/>
        <dbReference type="EC" id="2.1.1.166"/>
    </reaction>
</comment>
<comment type="subcellular location">
    <subcellularLocation>
        <location evidence="1">Cytoplasm</location>
    </subcellularLocation>
</comment>
<comment type="similarity">
    <text evidence="1">Belongs to the class I-like SAM-binding methyltransferase superfamily. RNA methyltransferase RlmE family.</text>
</comment>
<organism>
    <name type="scientific">Francisella philomiragia subsp. philomiragia (strain ATCC 25017 / CCUG 19701 / FSC 153 / O#319-036)</name>
    <dbReference type="NCBI Taxonomy" id="484022"/>
    <lineage>
        <taxon>Bacteria</taxon>
        <taxon>Pseudomonadati</taxon>
        <taxon>Pseudomonadota</taxon>
        <taxon>Gammaproteobacteria</taxon>
        <taxon>Thiotrichales</taxon>
        <taxon>Francisellaceae</taxon>
        <taxon>Francisella</taxon>
    </lineage>
</organism>
<keyword id="KW-0963">Cytoplasm</keyword>
<keyword id="KW-0489">Methyltransferase</keyword>
<keyword id="KW-0698">rRNA processing</keyword>
<keyword id="KW-0949">S-adenosyl-L-methionine</keyword>
<keyword id="KW-0808">Transferase</keyword>
<name>RLME_FRAP2</name>
<dbReference type="EC" id="2.1.1.166" evidence="1"/>
<dbReference type="EMBL" id="CP000937">
    <property type="protein sequence ID" value="ABZ86617.1"/>
    <property type="molecule type" value="Genomic_DNA"/>
</dbReference>
<dbReference type="SMR" id="B0TZQ8"/>
<dbReference type="KEGG" id="fph:Fphi_0399"/>
<dbReference type="eggNOG" id="COG0293">
    <property type="taxonomic scope" value="Bacteria"/>
</dbReference>
<dbReference type="HOGENOM" id="CLU_009422_4_0_6"/>
<dbReference type="GO" id="GO:0005737">
    <property type="term" value="C:cytoplasm"/>
    <property type="evidence" value="ECO:0007669"/>
    <property type="project" value="UniProtKB-SubCell"/>
</dbReference>
<dbReference type="GO" id="GO:0008650">
    <property type="term" value="F:rRNA (uridine-2'-O-)-methyltransferase activity"/>
    <property type="evidence" value="ECO:0007669"/>
    <property type="project" value="UniProtKB-UniRule"/>
</dbReference>
<dbReference type="FunFam" id="3.40.50.150:FF:000005">
    <property type="entry name" value="Ribosomal RNA large subunit methyltransferase E"/>
    <property type="match status" value="1"/>
</dbReference>
<dbReference type="Gene3D" id="3.40.50.150">
    <property type="entry name" value="Vaccinia Virus protein VP39"/>
    <property type="match status" value="1"/>
</dbReference>
<dbReference type="HAMAP" id="MF_01547">
    <property type="entry name" value="RNA_methyltr_E"/>
    <property type="match status" value="1"/>
</dbReference>
<dbReference type="InterPro" id="IPR050082">
    <property type="entry name" value="RNA_methyltr_RlmE"/>
</dbReference>
<dbReference type="InterPro" id="IPR002877">
    <property type="entry name" value="RNA_MeTrfase_FtsJ_dom"/>
</dbReference>
<dbReference type="InterPro" id="IPR015507">
    <property type="entry name" value="rRNA-MeTfrase_E"/>
</dbReference>
<dbReference type="InterPro" id="IPR029063">
    <property type="entry name" value="SAM-dependent_MTases_sf"/>
</dbReference>
<dbReference type="PANTHER" id="PTHR10920">
    <property type="entry name" value="RIBOSOMAL RNA METHYLTRANSFERASE"/>
    <property type="match status" value="1"/>
</dbReference>
<dbReference type="PANTHER" id="PTHR10920:SF18">
    <property type="entry name" value="RRNA METHYLTRANSFERASE 2, MITOCHONDRIAL"/>
    <property type="match status" value="1"/>
</dbReference>
<dbReference type="Pfam" id="PF01728">
    <property type="entry name" value="FtsJ"/>
    <property type="match status" value="1"/>
</dbReference>
<dbReference type="PIRSF" id="PIRSF005461">
    <property type="entry name" value="23S_rRNA_mtase"/>
    <property type="match status" value="1"/>
</dbReference>
<dbReference type="SUPFAM" id="SSF53335">
    <property type="entry name" value="S-adenosyl-L-methionine-dependent methyltransferases"/>
    <property type="match status" value="1"/>
</dbReference>
<accession>B0TZQ8</accession>
<sequence length="206" mass="23166">MSKGSTTKKWIQDHTSDYYVLQANKLGYRSRASFKIIEIQDKYNLFKQNMFIIDLGAAPGGWSEQVVKFIGNNGKLIALDLLEMAPIAGVEFIQGNFSSDETYERLNQLINDKKIDCVISDMAPNLSGNKTSDQARSIHLLELALDFATTNLNRNGSFVAKVFQGQGSDEYLKLVRESFNKVTQFKPKSSRPKSREFYVVATGFKG</sequence>